<proteinExistence type="inferred from homology"/>
<sequence>MINSPRVCIQVQSVYIEAQSSPDDERYVFAYTVTIRNLGRAPVQLLGRYWLITNGHGRETEVQGEGVVGVQPRIAPGEEYQYTSGAVIETPLGTMQGHYEMIDENGDAFTIDIPVFRLAVPTLIH</sequence>
<accession>B4TJ46</accession>
<evidence type="ECO:0000255" key="1">
    <source>
        <dbReference type="HAMAP-Rule" id="MF_00791"/>
    </source>
</evidence>
<reference key="1">
    <citation type="journal article" date="2011" name="J. Bacteriol.">
        <title>Comparative genomics of 28 Salmonella enterica isolates: evidence for CRISPR-mediated adaptive sublineage evolution.</title>
        <authorList>
            <person name="Fricke W.F."/>
            <person name="Mammel M.K."/>
            <person name="McDermott P.F."/>
            <person name="Tartera C."/>
            <person name="White D.G."/>
            <person name="Leclerc J.E."/>
            <person name="Ravel J."/>
            <person name="Cebula T.A."/>
        </authorList>
    </citation>
    <scope>NUCLEOTIDE SEQUENCE [LARGE SCALE GENOMIC DNA]</scope>
    <source>
        <strain>SL476</strain>
    </source>
</reference>
<gene>
    <name evidence="1" type="primary">apaG</name>
    <name type="ordered locus">SeHA_C0095</name>
</gene>
<name>APAG_SALHS</name>
<organism>
    <name type="scientific">Salmonella heidelberg (strain SL476)</name>
    <dbReference type="NCBI Taxonomy" id="454169"/>
    <lineage>
        <taxon>Bacteria</taxon>
        <taxon>Pseudomonadati</taxon>
        <taxon>Pseudomonadota</taxon>
        <taxon>Gammaproteobacteria</taxon>
        <taxon>Enterobacterales</taxon>
        <taxon>Enterobacteriaceae</taxon>
        <taxon>Salmonella</taxon>
    </lineage>
</organism>
<protein>
    <recommendedName>
        <fullName evidence="1">Protein ApaG</fullName>
    </recommendedName>
</protein>
<feature type="chain" id="PRO_1000133811" description="Protein ApaG">
    <location>
        <begin position="1"/>
        <end position="125"/>
    </location>
</feature>
<feature type="domain" description="ApaG" evidence="1">
    <location>
        <begin position="1"/>
        <end position="125"/>
    </location>
</feature>
<dbReference type="EMBL" id="CP001120">
    <property type="protein sequence ID" value="ACF68143.1"/>
    <property type="molecule type" value="Genomic_DNA"/>
</dbReference>
<dbReference type="RefSeq" id="WP_000610894.1">
    <property type="nucleotide sequence ID" value="NC_011083.1"/>
</dbReference>
<dbReference type="SMR" id="B4TJ46"/>
<dbReference type="GeneID" id="66754612"/>
<dbReference type="KEGG" id="seh:SeHA_C0095"/>
<dbReference type="HOGENOM" id="CLU_128074_0_0_6"/>
<dbReference type="Proteomes" id="UP000001866">
    <property type="component" value="Chromosome"/>
</dbReference>
<dbReference type="GO" id="GO:0070987">
    <property type="term" value="P:error-free translesion synthesis"/>
    <property type="evidence" value="ECO:0007669"/>
    <property type="project" value="TreeGrafter"/>
</dbReference>
<dbReference type="Gene3D" id="2.60.40.1470">
    <property type="entry name" value="ApaG domain"/>
    <property type="match status" value="1"/>
</dbReference>
<dbReference type="HAMAP" id="MF_00791">
    <property type="entry name" value="ApaG"/>
    <property type="match status" value="1"/>
</dbReference>
<dbReference type="InterPro" id="IPR007474">
    <property type="entry name" value="ApaG_domain"/>
</dbReference>
<dbReference type="InterPro" id="IPR036767">
    <property type="entry name" value="ApaG_sf"/>
</dbReference>
<dbReference type="InterPro" id="IPR023065">
    <property type="entry name" value="Uncharacterised_ApaG"/>
</dbReference>
<dbReference type="NCBIfam" id="NF003967">
    <property type="entry name" value="PRK05461.1"/>
    <property type="match status" value="1"/>
</dbReference>
<dbReference type="PANTHER" id="PTHR14289">
    <property type="entry name" value="F-BOX ONLY PROTEIN 3"/>
    <property type="match status" value="1"/>
</dbReference>
<dbReference type="PANTHER" id="PTHR14289:SF16">
    <property type="entry name" value="POLYMERASE DELTA-INTERACTING PROTEIN 2"/>
    <property type="match status" value="1"/>
</dbReference>
<dbReference type="Pfam" id="PF04379">
    <property type="entry name" value="DUF525"/>
    <property type="match status" value="1"/>
</dbReference>
<dbReference type="SUPFAM" id="SSF110069">
    <property type="entry name" value="ApaG-like"/>
    <property type="match status" value="1"/>
</dbReference>
<dbReference type="PROSITE" id="PS51087">
    <property type="entry name" value="APAG"/>
    <property type="match status" value="1"/>
</dbReference>